<proteinExistence type="inferred from homology"/>
<evidence type="ECO:0000255" key="1">
    <source>
        <dbReference type="HAMAP-Rule" id="MF_00518"/>
    </source>
</evidence>
<sequence>MKVVVQRVKEASVTNDTLNNQIKKGYCLLVGIGQNSTEQDADVIAKKIANARLFEDDNNKLNFNIQQMNGEILSVSQFTLYADVKKGNRPGFSNSKNPDQAVKIYEYFNDALRAYGLTVKTGEFGTHMNVSINNDGPVTIIYESQDGKIQ</sequence>
<organism>
    <name type="scientific">Staphylococcus aureus (strain JH9)</name>
    <dbReference type="NCBI Taxonomy" id="359786"/>
    <lineage>
        <taxon>Bacteria</taxon>
        <taxon>Bacillati</taxon>
        <taxon>Bacillota</taxon>
        <taxon>Bacilli</taxon>
        <taxon>Bacillales</taxon>
        <taxon>Staphylococcaceae</taxon>
        <taxon>Staphylococcus</taxon>
    </lineage>
</organism>
<feature type="chain" id="PRO_1000081671" description="D-aminoacyl-tRNA deacylase">
    <location>
        <begin position="1"/>
        <end position="150"/>
    </location>
</feature>
<feature type="short sequence motif" description="Gly-cisPro motif, important for rejection of L-amino acids" evidence="1">
    <location>
        <begin position="136"/>
        <end position="137"/>
    </location>
</feature>
<comment type="function">
    <text evidence="1">An aminoacyl-tRNA editing enzyme that deacylates mischarged D-aminoacyl-tRNAs. Also deacylates mischarged glycyl-tRNA(Ala), protecting cells against glycine mischarging by AlaRS. Acts via tRNA-based rather than protein-based catalysis; rejects L-amino acids rather than detecting D-amino acids in the active site. By recycling D-aminoacyl-tRNA to D-amino acids and free tRNA molecules, this enzyme counteracts the toxicity associated with the formation of D-aminoacyl-tRNA entities in vivo and helps enforce protein L-homochirality.</text>
</comment>
<comment type="catalytic activity">
    <reaction evidence="1">
        <text>glycyl-tRNA(Ala) + H2O = tRNA(Ala) + glycine + H(+)</text>
        <dbReference type="Rhea" id="RHEA:53744"/>
        <dbReference type="Rhea" id="RHEA-COMP:9657"/>
        <dbReference type="Rhea" id="RHEA-COMP:13640"/>
        <dbReference type="ChEBI" id="CHEBI:15377"/>
        <dbReference type="ChEBI" id="CHEBI:15378"/>
        <dbReference type="ChEBI" id="CHEBI:57305"/>
        <dbReference type="ChEBI" id="CHEBI:78442"/>
        <dbReference type="ChEBI" id="CHEBI:78522"/>
        <dbReference type="EC" id="3.1.1.96"/>
    </reaction>
</comment>
<comment type="catalytic activity">
    <reaction evidence="1">
        <text>a D-aminoacyl-tRNA + H2O = a tRNA + a D-alpha-amino acid + H(+)</text>
        <dbReference type="Rhea" id="RHEA:13953"/>
        <dbReference type="Rhea" id="RHEA-COMP:10123"/>
        <dbReference type="Rhea" id="RHEA-COMP:10124"/>
        <dbReference type="ChEBI" id="CHEBI:15377"/>
        <dbReference type="ChEBI" id="CHEBI:15378"/>
        <dbReference type="ChEBI" id="CHEBI:59871"/>
        <dbReference type="ChEBI" id="CHEBI:78442"/>
        <dbReference type="ChEBI" id="CHEBI:79333"/>
        <dbReference type="EC" id="3.1.1.96"/>
    </reaction>
</comment>
<comment type="subunit">
    <text evidence="1">Homodimer.</text>
</comment>
<comment type="subcellular location">
    <subcellularLocation>
        <location evidence="1">Cytoplasm</location>
    </subcellularLocation>
</comment>
<comment type="domain">
    <text evidence="1">A Gly-cisPro motif from one monomer fits into the active site of the other monomer to allow specific chiral rejection of L-amino acids.</text>
</comment>
<comment type="similarity">
    <text evidence="1">Belongs to the DTD family.</text>
</comment>
<dbReference type="EC" id="3.1.1.96" evidence="1"/>
<dbReference type="EMBL" id="CP000703">
    <property type="protein sequence ID" value="ABQ49480.1"/>
    <property type="molecule type" value="Genomic_DNA"/>
</dbReference>
<dbReference type="RefSeq" id="WP_000869983.1">
    <property type="nucleotide sequence ID" value="NC_009487.1"/>
</dbReference>
<dbReference type="SMR" id="A5ITF7"/>
<dbReference type="KEGG" id="saj:SaurJH9_1690"/>
<dbReference type="HOGENOM" id="CLU_076901_1_0_9"/>
<dbReference type="GO" id="GO:0005737">
    <property type="term" value="C:cytoplasm"/>
    <property type="evidence" value="ECO:0007669"/>
    <property type="project" value="UniProtKB-SubCell"/>
</dbReference>
<dbReference type="GO" id="GO:0051500">
    <property type="term" value="F:D-tyrosyl-tRNA(Tyr) deacylase activity"/>
    <property type="evidence" value="ECO:0007669"/>
    <property type="project" value="TreeGrafter"/>
</dbReference>
<dbReference type="GO" id="GO:0106026">
    <property type="term" value="F:Gly-tRNA(Ala) deacylase activity"/>
    <property type="evidence" value="ECO:0007669"/>
    <property type="project" value="UniProtKB-UniRule"/>
</dbReference>
<dbReference type="GO" id="GO:0043908">
    <property type="term" value="F:Ser(Gly)-tRNA(Ala) hydrolase activity"/>
    <property type="evidence" value="ECO:0007669"/>
    <property type="project" value="UniProtKB-UniRule"/>
</dbReference>
<dbReference type="GO" id="GO:0000049">
    <property type="term" value="F:tRNA binding"/>
    <property type="evidence" value="ECO:0007669"/>
    <property type="project" value="UniProtKB-UniRule"/>
</dbReference>
<dbReference type="GO" id="GO:0019478">
    <property type="term" value="P:D-amino acid catabolic process"/>
    <property type="evidence" value="ECO:0007669"/>
    <property type="project" value="UniProtKB-UniRule"/>
</dbReference>
<dbReference type="FunFam" id="3.50.80.10:FF:000005">
    <property type="entry name" value="D-aminoacyl-tRNA deacylase"/>
    <property type="match status" value="1"/>
</dbReference>
<dbReference type="Gene3D" id="3.50.80.10">
    <property type="entry name" value="D-tyrosyl-tRNA(Tyr) deacylase"/>
    <property type="match status" value="1"/>
</dbReference>
<dbReference type="HAMAP" id="MF_00518">
    <property type="entry name" value="Deacylase_Dtd"/>
    <property type="match status" value="1"/>
</dbReference>
<dbReference type="InterPro" id="IPR003732">
    <property type="entry name" value="Daa-tRNA_deacyls_DTD"/>
</dbReference>
<dbReference type="InterPro" id="IPR023509">
    <property type="entry name" value="DTD-like_sf"/>
</dbReference>
<dbReference type="NCBIfam" id="TIGR00256">
    <property type="entry name" value="D-aminoacyl-tRNA deacylase"/>
    <property type="match status" value="1"/>
</dbReference>
<dbReference type="PANTHER" id="PTHR10472:SF5">
    <property type="entry name" value="D-AMINOACYL-TRNA DEACYLASE 1"/>
    <property type="match status" value="1"/>
</dbReference>
<dbReference type="PANTHER" id="PTHR10472">
    <property type="entry name" value="D-TYROSYL-TRNA TYR DEACYLASE"/>
    <property type="match status" value="1"/>
</dbReference>
<dbReference type="Pfam" id="PF02580">
    <property type="entry name" value="Tyr_Deacylase"/>
    <property type="match status" value="1"/>
</dbReference>
<dbReference type="SUPFAM" id="SSF69500">
    <property type="entry name" value="DTD-like"/>
    <property type="match status" value="1"/>
</dbReference>
<gene>
    <name evidence="1" type="primary">dtd</name>
    <name type="ordered locus">SaurJH9_1690</name>
</gene>
<reference key="1">
    <citation type="submission" date="2007-05" db="EMBL/GenBank/DDBJ databases">
        <title>Complete sequence of chromosome of Staphylococcus aureus subsp. aureus JH9.</title>
        <authorList>
            <consortium name="US DOE Joint Genome Institute"/>
            <person name="Copeland A."/>
            <person name="Lucas S."/>
            <person name="Lapidus A."/>
            <person name="Barry K."/>
            <person name="Detter J.C."/>
            <person name="Glavina del Rio T."/>
            <person name="Hammon N."/>
            <person name="Israni S."/>
            <person name="Pitluck S."/>
            <person name="Chain P."/>
            <person name="Malfatti S."/>
            <person name="Shin M."/>
            <person name="Vergez L."/>
            <person name="Schmutz J."/>
            <person name="Larimer F."/>
            <person name="Land M."/>
            <person name="Hauser L."/>
            <person name="Kyrpides N."/>
            <person name="Kim E."/>
            <person name="Tomasz A."/>
            <person name="Richardson P."/>
        </authorList>
    </citation>
    <scope>NUCLEOTIDE SEQUENCE [LARGE SCALE GENOMIC DNA]</scope>
    <source>
        <strain>JH9</strain>
    </source>
</reference>
<protein>
    <recommendedName>
        <fullName evidence="1">D-aminoacyl-tRNA deacylase</fullName>
        <shortName evidence="1">DTD</shortName>
        <ecNumber evidence="1">3.1.1.96</ecNumber>
    </recommendedName>
    <alternativeName>
        <fullName evidence="1">Gly-tRNA(Ala) deacylase</fullName>
    </alternativeName>
</protein>
<name>DTD_STAA9</name>
<keyword id="KW-0963">Cytoplasm</keyword>
<keyword id="KW-0378">Hydrolase</keyword>
<keyword id="KW-0694">RNA-binding</keyword>
<keyword id="KW-0820">tRNA-binding</keyword>
<accession>A5ITF7</accession>